<reference key="1">
    <citation type="journal article" date="2002" name="Nucleic Acids Res.">
        <title>Genome sequence of Oceanobacillus iheyensis isolated from the Iheya Ridge and its unexpected adaptive capabilities to extreme environments.</title>
        <authorList>
            <person name="Takami H."/>
            <person name="Takaki Y."/>
            <person name="Uchiyama I."/>
        </authorList>
    </citation>
    <scope>NUCLEOTIDE SEQUENCE [LARGE SCALE GENOMIC DNA]</scope>
    <source>
        <strain>DSM 14371 / CIP 107618 / JCM 11309 / KCTC 3954 / HTE831</strain>
    </source>
</reference>
<comment type="function">
    <text evidence="1">Catalyzes the reversible oxidation of malate to oxaloacetate.</text>
</comment>
<comment type="catalytic activity">
    <reaction evidence="1">
        <text>(S)-malate + NAD(+) = oxaloacetate + NADH + H(+)</text>
        <dbReference type="Rhea" id="RHEA:21432"/>
        <dbReference type="ChEBI" id="CHEBI:15378"/>
        <dbReference type="ChEBI" id="CHEBI:15589"/>
        <dbReference type="ChEBI" id="CHEBI:16452"/>
        <dbReference type="ChEBI" id="CHEBI:57540"/>
        <dbReference type="ChEBI" id="CHEBI:57945"/>
        <dbReference type="EC" id="1.1.1.37"/>
    </reaction>
</comment>
<comment type="similarity">
    <text evidence="1">Belongs to the LDH/MDH superfamily. MDH type 3 family.</text>
</comment>
<accession>Q8EPE2</accession>
<evidence type="ECO:0000255" key="1">
    <source>
        <dbReference type="HAMAP-Rule" id="MF_00487"/>
    </source>
</evidence>
<proteinExistence type="inferred from homology"/>
<sequence length="312" mass="33495">MGLKRKKISVIGSGFTGATTALMVAQKELGDVVLVDIPDMEDPTKGKALDMAEAAPVQGFDAKITGTSNYADTEGSDLVIITAGIARKPGMSRDDLVNTNANIMKSVTKEIVHYSPNTTIVVLTNPVDAMTYTVFKESGLPKERVIGQSGILDTARFRTFVAEELNLSVKDVTGFVLGGHGDDMVPLIRYSYAGGIPLEKLIPQERLDAIVQRTRTGGGEIVNLLGNGSAYYAPAASLTVMAEAILKDQRRVLPTIAYLEGEYGYQDIYLGVPTILGGEGIEEIIELDLTKEEKAQLDKSADSVKNVLNVLQ</sequence>
<gene>
    <name evidence="1" type="primary">mdh</name>
    <name type="synonym">citH</name>
    <name type="ordered locus">OB2166</name>
</gene>
<dbReference type="EC" id="1.1.1.37" evidence="1"/>
<dbReference type="EMBL" id="BA000028">
    <property type="protein sequence ID" value="BAC14122.1"/>
    <property type="molecule type" value="Genomic_DNA"/>
</dbReference>
<dbReference type="RefSeq" id="WP_011066560.1">
    <property type="nucleotide sequence ID" value="NC_004193.1"/>
</dbReference>
<dbReference type="SMR" id="Q8EPE2"/>
<dbReference type="STRING" id="221109.gene:10734414"/>
<dbReference type="KEGG" id="oih:OB2166"/>
<dbReference type="eggNOG" id="COG0039">
    <property type="taxonomic scope" value="Bacteria"/>
</dbReference>
<dbReference type="HOGENOM" id="CLU_045401_2_1_9"/>
<dbReference type="OrthoDB" id="9802969at2"/>
<dbReference type="PhylomeDB" id="Q8EPE2"/>
<dbReference type="Proteomes" id="UP000000822">
    <property type="component" value="Chromosome"/>
</dbReference>
<dbReference type="GO" id="GO:0004459">
    <property type="term" value="F:L-lactate dehydrogenase activity"/>
    <property type="evidence" value="ECO:0007669"/>
    <property type="project" value="TreeGrafter"/>
</dbReference>
<dbReference type="GO" id="GO:0030060">
    <property type="term" value="F:L-malate dehydrogenase (NAD+) activity"/>
    <property type="evidence" value="ECO:0007669"/>
    <property type="project" value="UniProtKB-UniRule"/>
</dbReference>
<dbReference type="GO" id="GO:0006089">
    <property type="term" value="P:lactate metabolic process"/>
    <property type="evidence" value="ECO:0007669"/>
    <property type="project" value="TreeGrafter"/>
</dbReference>
<dbReference type="GO" id="GO:0006099">
    <property type="term" value="P:tricarboxylic acid cycle"/>
    <property type="evidence" value="ECO:0007669"/>
    <property type="project" value="UniProtKB-UniRule"/>
</dbReference>
<dbReference type="CDD" id="cd01339">
    <property type="entry name" value="LDH-like_MDH"/>
    <property type="match status" value="1"/>
</dbReference>
<dbReference type="FunFam" id="3.40.50.720:FF:000018">
    <property type="entry name" value="Malate dehydrogenase"/>
    <property type="match status" value="1"/>
</dbReference>
<dbReference type="FunFam" id="3.90.110.10:FF:000004">
    <property type="entry name" value="Malate dehydrogenase"/>
    <property type="match status" value="1"/>
</dbReference>
<dbReference type="Gene3D" id="3.90.110.10">
    <property type="entry name" value="Lactate dehydrogenase/glycoside hydrolase, family 4, C-terminal"/>
    <property type="match status" value="1"/>
</dbReference>
<dbReference type="Gene3D" id="3.40.50.720">
    <property type="entry name" value="NAD(P)-binding Rossmann-like Domain"/>
    <property type="match status" value="1"/>
</dbReference>
<dbReference type="HAMAP" id="MF_00487">
    <property type="entry name" value="Malate_dehydrog_3"/>
    <property type="match status" value="1"/>
</dbReference>
<dbReference type="InterPro" id="IPR001557">
    <property type="entry name" value="L-lactate/malate_DH"/>
</dbReference>
<dbReference type="InterPro" id="IPR022383">
    <property type="entry name" value="Lactate/malate_DH_C"/>
</dbReference>
<dbReference type="InterPro" id="IPR001236">
    <property type="entry name" value="Lactate/malate_DH_N"/>
</dbReference>
<dbReference type="InterPro" id="IPR015955">
    <property type="entry name" value="Lactate_DH/Glyco_Ohase_4_C"/>
</dbReference>
<dbReference type="InterPro" id="IPR011275">
    <property type="entry name" value="Malate_DH_type3"/>
</dbReference>
<dbReference type="InterPro" id="IPR036291">
    <property type="entry name" value="NAD(P)-bd_dom_sf"/>
</dbReference>
<dbReference type="NCBIfam" id="TIGR01763">
    <property type="entry name" value="MalateDH_bact"/>
    <property type="match status" value="1"/>
</dbReference>
<dbReference type="NCBIfam" id="NF004863">
    <property type="entry name" value="PRK06223.1"/>
    <property type="match status" value="1"/>
</dbReference>
<dbReference type="PANTHER" id="PTHR43128">
    <property type="entry name" value="L-2-HYDROXYCARBOXYLATE DEHYDROGENASE (NAD(P)(+))"/>
    <property type="match status" value="1"/>
</dbReference>
<dbReference type="PANTHER" id="PTHR43128:SF16">
    <property type="entry name" value="L-LACTATE DEHYDROGENASE"/>
    <property type="match status" value="1"/>
</dbReference>
<dbReference type="Pfam" id="PF02866">
    <property type="entry name" value="Ldh_1_C"/>
    <property type="match status" value="1"/>
</dbReference>
<dbReference type="Pfam" id="PF00056">
    <property type="entry name" value="Ldh_1_N"/>
    <property type="match status" value="1"/>
</dbReference>
<dbReference type="PIRSF" id="PIRSF000102">
    <property type="entry name" value="Lac_mal_DH"/>
    <property type="match status" value="1"/>
</dbReference>
<dbReference type="PRINTS" id="PR00086">
    <property type="entry name" value="LLDHDRGNASE"/>
</dbReference>
<dbReference type="SUPFAM" id="SSF56327">
    <property type="entry name" value="LDH C-terminal domain-like"/>
    <property type="match status" value="1"/>
</dbReference>
<dbReference type="SUPFAM" id="SSF51735">
    <property type="entry name" value="NAD(P)-binding Rossmann-fold domains"/>
    <property type="match status" value="1"/>
</dbReference>
<feature type="chain" id="PRO_0000113459" description="Malate dehydrogenase">
    <location>
        <begin position="1"/>
        <end position="312"/>
    </location>
</feature>
<feature type="active site" description="Proton acceptor" evidence="1">
    <location>
        <position position="180"/>
    </location>
</feature>
<feature type="binding site" evidence="1">
    <location>
        <begin position="12"/>
        <end position="17"/>
    </location>
    <ligand>
        <name>NAD(+)</name>
        <dbReference type="ChEBI" id="CHEBI:57540"/>
    </ligand>
</feature>
<feature type="binding site" evidence="1">
    <location>
        <position position="36"/>
    </location>
    <ligand>
        <name>NAD(+)</name>
        <dbReference type="ChEBI" id="CHEBI:57540"/>
    </ligand>
</feature>
<feature type="binding site" evidence="1">
    <location>
        <position position="87"/>
    </location>
    <ligand>
        <name>substrate</name>
    </ligand>
</feature>
<feature type="binding site" evidence="1">
    <location>
        <position position="93"/>
    </location>
    <ligand>
        <name>substrate</name>
    </ligand>
</feature>
<feature type="binding site" evidence="1">
    <location>
        <position position="100"/>
    </location>
    <ligand>
        <name>NAD(+)</name>
        <dbReference type="ChEBI" id="CHEBI:57540"/>
    </ligand>
</feature>
<feature type="binding site" evidence="1">
    <location>
        <begin position="123"/>
        <end position="125"/>
    </location>
    <ligand>
        <name>NAD(+)</name>
        <dbReference type="ChEBI" id="CHEBI:57540"/>
    </ligand>
</feature>
<feature type="binding site" evidence="1">
    <location>
        <position position="125"/>
    </location>
    <ligand>
        <name>substrate</name>
    </ligand>
</feature>
<feature type="binding site" evidence="1">
    <location>
        <position position="156"/>
    </location>
    <ligand>
        <name>substrate</name>
    </ligand>
</feature>
<feature type="modified residue" description="Phosphoserine" evidence="1">
    <location>
        <position position="149"/>
    </location>
</feature>
<name>MDH_OCEIH</name>
<protein>
    <recommendedName>
        <fullName evidence="1">Malate dehydrogenase</fullName>
        <ecNumber evidence="1">1.1.1.37</ecNumber>
    </recommendedName>
</protein>
<organism>
    <name type="scientific">Oceanobacillus iheyensis (strain DSM 14371 / CIP 107618 / JCM 11309 / KCTC 3954 / HTE831)</name>
    <dbReference type="NCBI Taxonomy" id="221109"/>
    <lineage>
        <taxon>Bacteria</taxon>
        <taxon>Bacillati</taxon>
        <taxon>Bacillota</taxon>
        <taxon>Bacilli</taxon>
        <taxon>Bacillales</taxon>
        <taxon>Bacillaceae</taxon>
        <taxon>Oceanobacillus</taxon>
    </lineage>
</organism>
<keyword id="KW-0520">NAD</keyword>
<keyword id="KW-0560">Oxidoreductase</keyword>
<keyword id="KW-0597">Phosphoprotein</keyword>
<keyword id="KW-1185">Reference proteome</keyword>
<keyword id="KW-0816">Tricarboxylic acid cycle</keyword>